<protein>
    <recommendedName>
        <fullName evidence="1">Succinyl-diaminopimelate desuccinylase</fullName>
        <shortName evidence="1">SDAP desuccinylase</shortName>
        <ecNumber evidence="1">3.5.1.18</ecNumber>
    </recommendedName>
    <alternativeName>
        <fullName evidence="1">N-succinyl-LL-2,6-diaminoheptanedioate amidohydrolase</fullName>
    </alternativeName>
</protein>
<organism>
    <name type="scientific">Nitrosomonas europaea (strain ATCC 19718 / CIP 103999 / KCTC 2705 / NBRC 14298)</name>
    <dbReference type="NCBI Taxonomy" id="228410"/>
    <lineage>
        <taxon>Bacteria</taxon>
        <taxon>Pseudomonadati</taxon>
        <taxon>Pseudomonadota</taxon>
        <taxon>Betaproteobacteria</taxon>
        <taxon>Nitrosomonadales</taxon>
        <taxon>Nitrosomonadaceae</taxon>
        <taxon>Nitrosomonas</taxon>
    </lineage>
</organism>
<gene>
    <name evidence="1" type="primary">dapE</name>
    <name type="ordered locus">NE0108</name>
</gene>
<reference key="1">
    <citation type="journal article" date="2003" name="J. Bacteriol.">
        <title>Complete genome sequence of the ammonia-oxidizing bacterium and obligate chemolithoautotroph Nitrosomonas europaea.</title>
        <authorList>
            <person name="Chain P."/>
            <person name="Lamerdin J.E."/>
            <person name="Larimer F.W."/>
            <person name="Regala W."/>
            <person name="Lao V."/>
            <person name="Land M.L."/>
            <person name="Hauser L."/>
            <person name="Hooper A.B."/>
            <person name="Klotz M.G."/>
            <person name="Norton J."/>
            <person name="Sayavedra-Soto L.A."/>
            <person name="Arciero D.M."/>
            <person name="Hommes N.G."/>
            <person name="Whittaker M.M."/>
            <person name="Arp D.J."/>
        </authorList>
    </citation>
    <scope>NUCLEOTIDE SEQUENCE [LARGE SCALE GENOMIC DNA]</scope>
    <source>
        <strain>ATCC 19718 / CIP 103999 / KCTC 2705 / NBRC 14298</strain>
    </source>
</reference>
<comment type="function">
    <text evidence="1">Catalyzes the hydrolysis of N-succinyl-L,L-diaminopimelic acid (SDAP), forming succinate and LL-2,6-diaminopimelate (DAP), an intermediate involved in the bacterial biosynthesis of lysine and meso-diaminopimelic acid, an essential component of bacterial cell walls.</text>
</comment>
<comment type="catalytic activity">
    <reaction evidence="1">
        <text>N-succinyl-(2S,6S)-2,6-diaminopimelate + H2O = (2S,6S)-2,6-diaminopimelate + succinate</text>
        <dbReference type="Rhea" id="RHEA:22608"/>
        <dbReference type="ChEBI" id="CHEBI:15377"/>
        <dbReference type="ChEBI" id="CHEBI:30031"/>
        <dbReference type="ChEBI" id="CHEBI:57609"/>
        <dbReference type="ChEBI" id="CHEBI:58087"/>
        <dbReference type="EC" id="3.5.1.18"/>
    </reaction>
</comment>
<comment type="cofactor">
    <cofactor evidence="1">
        <name>Zn(2+)</name>
        <dbReference type="ChEBI" id="CHEBI:29105"/>
    </cofactor>
    <cofactor evidence="1">
        <name>Co(2+)</name>
        <dbReference type="ChEBI" id="CHEBI:48828"/>
    </cofactor>
    <text evidence="1">Binds 2 Zn(2+) or Co(2+) ions per subunit.</text>
</comment>
<comment type="pathway">
    <text evidence="1">Amino-acid biosynthesis; L-lysine biosynthesis via DAP pathway; LL-2,6-diaminopimelate from (S)-tetrahydrodipicolinate (succinylase route): step 3/3.</text>
</comment>
<comment type="subunit">
    <text evidence="1">Homodimer.</text>
</comment>
<comment type="similarity">
    <text evidence="1">Belongs to the peptidase M20A family. DapE subfamily.</text>
</comment>
<evidence type="ECO:0000255" key="1">
    <source>
        <dbReference type="HAMAP-Rule" id="MF_01690"/>
    </source>
</evidence>
<keyword id="KW-0028">Amino-acid biosynthesis</keyword>
<keyword id="KW-0170">Cobalt</keyword>
<keyword id="KW-0220">Diaminopimelate biosynthesis</keyword>
<keyword id="KW-0378">Hydrolase</keyword>
<keyword id="KW-0457">Lysine biosynthesis</keyword>
<keyword id="KW-0479">Metal-binding</keyword>
<keyword id="KW-1185">Reference proteome</keyword>
<keyword id="KW-0862">Zinc</keyword>
<dbReference type="EC" id="3.5.1.18" evidence="1"/>
<dbReference type="EMBL" id="AL954747">
    <property type="protein sequence ID" value="CAD84019.1"/>
    <property type="molecule type" value="Genomic_DNA"/>
</dbReference>
<dbReference type="RefSeq" id="WP_011110760.1">
    <property type="nucleotide sequence ID" value="NC_004757.1"/>
</dbReference>
<dbReference type="SMR" id="Q82XY4"/>
<dbReference type="STRING" id="228410.NE0108"/>
<dbReference type="GeneID" id="87103322"/>
<dbReference type="KEGG" id="neu:NE0108"/>
<dbReference type="eggNOG" id="COG0624">
    <property type="taxonomic scope" value="Bacteria"/>
</dbReference>
<dbReference type="HOGENOM" id="CLU_021802_4_0_4"/>
<dbReference type="OrthoDB" id="9809784at2"/>
<dbReference type="PhylomeDB" id="Q82XY4"/>
<dbReference type="UniPathway" id="UPA00034">
    <property type="reaction ID" value="UER00021"/>
</dbReference>
<dbReference type="Proteomes" id="UP000001416">
    <property type="component" value="Chromosome"/>
</dbReference>
<dbReference type="GO" id="GO:0008777">
    <property type="term" value="F:acetylornithine deacetylase activity"/>
    <property type="evidence" value="ECO:0007669"/>
    <property type="project" value="TreeGrafter"/>
</dbReference>
<dbReference type="GO" id="GO:0050897">
    <property type="term" value="F:cobalt ion binding"/>
    <property type="evidence" value="ECO:0007669"/>
    <property type="project" value="UniProtKB-UniRule"/>
</dbReference>
<dbReference type="GO" id="GO:0009014">
    <property type="term" value="F:succinyl-diaminopimelate desuccinylase activity"/>
    <property type="evidence" value="ECO:0007669"/>
    <property type="project" value="UniProtKB-UniRule"/>
</dbReference>
<dbReference type="GO" id="GO:0008270">
    <property type="term" value="F:zinc ion binding"/>
    <property type="evidence" value="ECO:0007669"/>
    <property type="project" value="UniProtKB-UniRule"/>
</dbReference>
<dbReference type="GO" id="GO:0019877">
    <property type="term" value="P:diaminopimelate biosynthetic process"/>
    <property type="evidence" value="ECO:0007669"/>
    <property type="project" value="UniProtKB-UniRule"/>
</dbReference>
<dbReference type="GO" id="GO:0006526">
    <property type="term" value="P:L-arginine biosynthetic process"/>
    <property type="evidence" value="ECO:0007669"/>
    <property type="project" value="TreeGrafter"/>
</dbReference>
<dbReference type="GO" id="GO:0009089">
    <property type="term" value="P:lysine biosynthetic process via diaminopimelate"/>
    <property type="evidence" value="ECO:0007669"/>
    <property type="project" value="UniProtKB-UniRule"/>
</dbReference>
<dbReference type="CDD" id="cd03891">
    <property type="entry name" value="M20_DapE_proteobac"/>
    <property type="match status" value="1"/>
</dbReference>
<dbReference type="FunFam" id="3.30.70.360:FF:000011">
    <property type="entry name" value="Succinyl-diaminopimelate desuccinylase"/>
    <property type="match status" value="1"/>
</dbReference>
<dbReference type="FunFam" id="3.40.630.10:FF:000005">
    <property type="entry name" value="Succinyl-diaminopimelate desuccinylase"/>
    <property type="match status" value="1"/>
</dbReference>
<dbReference type="Gene3D" id="3.40.630.10">
    <property type="entry name" value="Zn peptidases"/>
    <property type="match status" value="2"/>
</dbReference>
<dbReference type="HAMAP" id="MF_01690">
    <property type="entry name" value="DapE"/>
    <property type="match status" value="1"/>
</dbReference>
<dbReference type="InterPro" id="IPR036264">
    <property type="entry name" value="Bact_exopeptidase_dim_dom"/>
</dbReference>
<dbReference type="InterPro" id="IPR005941">
    <property type="entry name" value="DapE_proteobac"/>
</dbReference>
<dbReference type="InterPro" id="IPR002933">
    <property type="entry name" value="Peptidase_M20"/>
</dbReference>
<dbReference type="InterPro" id="IPR011650">
    <property type="entry name" value="Peptidase_M20_dimer"/>
</dbReference>
<dbReference type="InterPro" id="IPR050072">
    <property type="entry name" value="Peptidase_M20A"/>
</dbReference>
<dbReference type="NCBIfam" id="TIGR01246">
    <property type="entry name" value="dapE_proteo"/>
    <property type="match status" value="1"/>
</dbReference>
<dbReference type="NCBIfam" id="NF009557">
    <property type="entry name" value="PRK13009.1"/>
    <property type="match status" value="1"/>
</dbReference>
<dbReference type="PANTHER" id="PTHR43808">
    <property type="entry name" value="ACETYLORNITHINE DEACETYLASE"/>
    <property type="match status" value="1"/>
</dbReference>
<dbReference type="PANTHER" id="PTHR43808:SF31">
    <property type="entry name" value="N-ACETYL-L-CITRULLINE DEACETYLASE"/>
    <property type="match status" value="1"/>
</dbReference>
<dbReference type="Pfam" id="PF07687">
    <property type="entry name" value="M20_dimer"/>
    <property type="match status" value="1"/>
</dbReference>
<dbReference type="Pfam" id="PF01546">
    <property type="entry name" value="Peptidase_M20"/>
    <property type="match status" value="1"/>
</dbReference>
<dbReference type="SUPFAM" id="SSF55031">
    <property type="entry name" value="Bacterial exopeptidase dimerisation domain"/>
    <property type="match status" value="1"/>
</dbReference>
<dbReference type="SUPFAM" id="SSF53187">
    <property type="entry name" value="Zn-dependent exopeptidases"/>
    <property type="match status" value="1"/>
</dbReference>
<name>DAPE_NITEU</name>
<sequence>MSNSTLTLAQMLIARRSLTPDDDGCQKMIMHRLAGLGFKSDSMTFGEVENLWTRKGSDAPLVCFAGHTDVVPTGPVTQWDSDPFTPVVRDGFLYGRGAADMKTSLAAFVTAIEEFIELHPDHKGSIALLITSDEEGPAVDGTVKVVEALQTRGEMIDYCIVGEPTCTNQLGDTIKNGRRGSLSGNLTVRGIQGHIAYPHLARNPIHTAAPAIAELAQTVWDNGNEYFPATTWHISNIHGGTGATNVIPGEINLLFNFRFSTASTVDSLKARVHEILDRHGLDYELIWELSGKPYLTPRGTLADAVSAAIREVTGIEPELSTTGGTSDGRFIADICQQVVEFGPRNATIHKINESVEVADVERLARIYRLTLENLLL</sequence>
<accession>Q82XY4</accession>
<feature type="chain" id="PRO_0000375631" description="Succinyl-diaminopimelate desuccinylase">
    <location>
        <begin position="1"/>
        <end position="376"/>
    </location>
</feature>
<feature type="active site" evidence="1">
    <location>
        <position position="69"/>
    </location>
</feature>
<feature type="active site" description="Proton acceptor" evidence="1">
    <location>
        <position position="134"/>
    </location>
</feature>
<feature type="binding site" evidence="1">
    <location>
        <position position="67"/>
    </location>
    <ligand>
        <name>Zn(2+)</name>
        <dbReference type="ChEBI" id="CHEBI:29105"/>
        <label>1</label>
    </ligand>
</feature>
<feature type="binding site" evidence="1">
    <location>
        <position position="100"/>
    </location>
    <ligand>
        <name>Zn(2+)</name>
        <dbReference type="ChEBI" id="CHEBI:29105"/>
        <label>1</label>
    </ligand>
</feature>
<feature type="binding site" evidence="1">
    <location>
        <position position="100"/>
    </location>
    <ligand>
        <name>Zn(2+)</name>
        <dbReference type="ChEBI" id="CHEBI:29105"/>
        <label>2</label>
    </ligand>
</feature>
<feature type="binding site" evidence="1">
    <location>
        <position position="135"/>
    </location>
    <ligand>
        <name>Zn(2+)</name>
        <dbReference type="ChEBI" id="CHEBI:29105"/>
        <label>2</label>
    </ligand>
</feature>
<feature type="binding site" evidence="1">
    <location>
        <position position="163"/>
    </location>
    <ligand>
        <name>Zn(2+)</name>
        <dbReference type="ChEBI" id="CHEBI:29105"/>
        <label>1</label>
    </ligand>
</feature>
<feature type="binding site" evidence="1">
    <location>
        <position position="349"/>
    </location>
    <ligand>
        <name>Zn(2+)</name>
        <dbReference type="ChEBI" id="CHEBI:29105"/>
        <label>2</label>
    </ligand>
</feature>
<proteinExistence type="inferred from homology"/>